<keyword id="KW-1003">Cell membrane</keyword>
<keyword id="KW-0472">Membrane</keyword>
<keyword id="KW-0653">Protein transport</keyword>
<keyword id="KW-0811">Translocation</keyword>
<keyword id="KW-0812">Transmembrane</keyword>
<keyword id="KW-1133">Transmembrane helix</keyword>
<keyword id="KW-0813">Transport</keyword>
<sequence>MGAMSPWHWAIVALVVVILFGSKKLPDAARGLGRSLRIFKSEVKEMQNDNSTPAPTAQSAPPPQSAPAELPVADTTTAPVTPPAPVQPQSQHTEPKSA</sequence>
<organism>
    <name type="scientific">Rhodococcus erythropolis</name>
    <name type="common">Arthrobacter picolinophilus</name>
    <dbReference type="NCBI Taxonomy" id="1833"/>
    <lineage>
        <taxon>Bacteria</taxon>
        <taxon>Bacillati</taxon>
        <taxon>Actinomycetota</taxon>
        <taxon>Actinomycetes</taxon>
        <taxon>Mycobacteriales</taxon>
        <taxon>Nocardiaceae</taxon>
        <taxon>Rhodococcus</taxon>
        <taxon>Rhodococcus erythropolis group</taxon>
    </lineage>
</organism>
<name>TATA_RHOER</name>
<feature type="chain" id="PRO_0000097955" description="Sec-independent protein translocase protein TatA">
    <location>
        <begin position="1"/>
        <end position="98"/>
    </location>
</feature>
<feature type="transmembrane region" description="Helical" evidence="1">
    <location>
        <begin position="1"/>
        <end position="21"/>
    </location>
</feature>
<feature type="region of interest" description="Disordered" evidence="2">
    <location>
        <begin position="43"/>
        <end position="98"/>
    </location>
</feature>
<feature type="compositionally biased region" description="Low complexity" evidence="2">
    <location>
        <begin position="66"/>
        <end position="79"/>
    </location>
</feature>
<proteinExistence type="inferred from homology"/>
<dbReference type="EMBL" id="Z82004">
    <property type="protein sequence ID" value="CAB04766.1"/>
    <property type="molecule type" value="Genomic_DNA"/>
</dbReference>
<dbReference type="SMR" id="P72267"/>
<dbReference type="STRING" id="1833.XU06_14770"/>
<dbReference type="GO" id="GO:0033281">
    <property type="term" value="C:TAT protein transport complex"/>
    <property type="evidence" value="ECO:0007669"/>
    <property type="project" value="UniProtKB-UniRule"/>
</dbReference>
<dbReference type="GO" id="GO:0008320">
    <property type="term" value="F:protein transmembrane transporter activity"/>
    <property type="evidence" value="ECO:0007669"/>
    <property type="project" value="UniProtKB-UniRule"/>
</dbReference>
<dbReference type="GO" id="GO:0043953">
    <property type="term" value="P:protein transport by the Tat complex"/>
    <property type="evidence" value="ECO:0007669"/>
    <property type="project" value="UniProtKB-UniRule"/>
</dbReference>
<dbReference type="Gene3D" id="1.20.5.3310">
    <property type="match status" value="1"/>
</dbReference>
<dbReference type="HAMAP" id="MF_00236">
    <property type="entry name" value="TatA_E"/>
    <property type="match status" value="1"/>
</dbReference>
<dbReference type="InterPro" id="IPR003369">
    <property type="entry name" value="TatA/B/E"/>
</dbReference>
<dbReference type="InterPro" id="IPR006312">
    <property type="entry name" value="TatA/E"/>
</dbReference>
<dbReference type="NCBIfam" id="NF001854">
    <property type="entry name" value="PRK00575.1"/>
    <property type="match status" value="1"/>
</dbReference>
<dbReference type="NCBIfam" id="TIGR01411">
    <property type="entry name" value="tatAE"/>
    <property type="match status" value="1"/>
</dbReference>
<dbReference type="PANTHER" id="PTHR42982">
    <property type="entry name" value="SEC-INDEPENDENT PROTEIN TRANSLOCASE PROTEIN TATA"/>
    <property type="match status" value="1"/>
</dbReference>
<dbReference type="PANTHER" id="PTHR42982:SF8">
    <property type="entry name" value="SEC-INDEPENDENT PROTEIN TRANSLOCASE PROTEIN TATA"/>
    <property type="match status" value="1"/>
</dbReference>
<dbReference type="Pfam" id="PF02416">
    <property type="entry name" value="TatA_B_E"/>
    <property type="match status" value="1"/>
</dbReference>
<evidence type="ECO:0000255" key="1">
    <source>
        <dbReference type="HAMAP-Rule" id="MF_00236"/>
    </source>
</evidence>
<evidence type="ECO:0000256" key="2">
    <source>
        <dbReference type="SAM" id="MobiDB-lite"/>
    </source>
</evidence>
<gene>
    <name evidence="1" type="primary">tatA</name>
</gene>
<reference key="1">
    <citation type="journal article" date="1999" name="DNA Seq.">
        <title>Sequence analysis of the oxidase/reductase genes upstream of the Rhodococcus erythropolis aldehyde dehydrogenase gene thcA reveals a gene organisation different from Mycobacterium tuberculosis.</title>
        <authorList>
            <person name="Nagy I."/>
            <person name="De Mot R."/>
        </authorList>
    </citation>
    <scope>NUCLEOTIDE SEQUENCE [GENOMIC DNA]</scope>
    <source>
        <strain>NI86/21</strain>
    </source>
</reference>
<comment type="function">
    <text evidence="1">Part of the twin-arginine translocation (Tat) system that transports large folded proteins containing a characteristic twin-arginine motif in their signal peptide across membranes. TatA could form the protein-conducting channel of the Tat system.</text>
</comment>
<comment type="subunit">
    <text evidence="1">The Tat system comprises two distinct complexes: a TatABC complex, containing multiple copies of TatA, TatB and TatC subunits, and a separate TatA complex, containing only TatA subunits. Substrates initially bind to the TatABC complex, which probably triggers association of the separate TatA complex to form the active translocon.</text>
</comment>
<comment type="subcellular location">
    <subcellularLocation>
        <location evidence="1">Cell membrane</location>
        <topology evidence="1">Single-pass membrane protein</topology>
    </subcellularLocation>
</comment>
<comment type="similarity">
    <text evidence="1">Belongs to the TatA/E family.</text>
</comment>
<protein>
    <recommendedName>
        <fullName evidence="1">Sec-independent protein translocase protein TatA</fullName>
    </recommendedName>
</protein>
<accession>P72267</accession>